<reference key="1">
    <citation type="journal article" date="2001" name="Biochem. Biophys. Res. Commun.">
        <title>Gene cloning and characterization of alanine racemases from Shigella dysenteriae, Shigella boydii, Shigella flexneri, and Shigella sonnei.</title>
        <authorList>
            <person name="Yokoigawa K."/>
            <person name="Hirasawa R."/>
            <person name="Ueno H."/>
            <person name="Okubo Y."/>
            <person name="Umesako S."/>
            <person name="Soda K."/>
        </authorList>
    </citation>
    <scope>NUCLEOTIDE SEQUENCE [GENOMIC DNA]</scope>
    <scope>PROTEIN SEQUENCE OF 1-21</scope>
    <scope>CHARACTERIZATION</scope>
</reference>
<comment type="function">
    <text>Catalyzes the interconversion of L-alanine and D-alanine.</text>
</comment>
<comment type="catalytic activity">
    <reaction>
        <text>L-alanine = D-alanine</text>
        <dbReference type="Rhea" id="RHEA:20249"/>
        <dbReference type="ChEBI" id="CHEBI:57416"/>
        <dbReference type="ChEBI" id="CHEBI:57972"/>
        <dbReference type="EC" id="5.1.1.1"/>
    </reaction>
</comment>
<comment type="cofactor">
    <cofactor>
        <name>pyridoxal 5'-phosphate</name>
        <dbReference type="ChEBI" id="CHEBI:597326"/>
    </cofactor>
</comment>
<comment type="biophysicochemical properties">
    <phDependence>
        <text>Optimum pH is 8-10.</text>
    </phDependence>
    <temperatureDependence>
        <text>Optimum temperature is 50 degrees Celsius.</text>
    </temperatureDependence>
</comment>
<comment type="pathway">
    <text>Amino-acid biosynthesis; D-alanine biosynthesis; D-alanine from L-alanine: step 1/1.</text>
</comment>
<comment type="pathway">
    <text>Cell wall biogenesis; peptidoglycan biosynthesis.</text>
</comment>
<comment type="subunit">
    <text>Monomer but homodimer in the presence of the substrate.</text>
</comment>
<comment type="similarity">
    <text evidence="2">Belongs to the alanine racemase family.</text>
</comment>
<sequence>MQAATVVINRRALRHNLQRLRELAPASKMVAVVKANAYGHGLLETARTLPDADAFGVARLEEALRLRAGGITKPVLLLEGFFDARDLPTISAQHFHTAVHNEEQLAALEEASLDEPVTVWMKLDTGMHRLGVRPEQAEAFYHRLTQCKNVRQPVNIVSHFARADEPKCGATEKQLAIFNTFCEGKPGQRSIAASGGILLWPQSHFDWVRPGIILYGVSPLEDRSTGADFGCQPVMSLTSSLIAVREHKAGEPVGYGGTWVSERDTRLGVVAMGYGDGYPRAAPSGTPVLVNGREVPIVGRVAMDMICVDLGPQAQDKAGDPVILWGEGLPVERIAEMTKVSAYELITRLTSRVAMKYVD</sequence>
<keyword id="KW-0133">Cell shape</keyword>
<keyword id="KW-0961">Cell wall biogenesis/degradation</keyword>
<keyword id="KW-0903">Direct protein sequencing</keyword>
<keyword id="KW-0413">Isomerase</keyword>
<keyword id="KW-0573">Peptidoglycan synthesis</keyword>
<keyword id="KW-0663">Pyridoxal phosphate</keyword>
<protein>
    <recommendedName>
        <fullName>Alanine racemase, biosynthetic</fullName>
        <ecNumber>5.1.1.1</ecNumber>
    </recommendedName>
</protein>
<evidence type="ECO:0000250" key="1"/>
<evidence type="ECO:0000305" key="2"/>
<organism>
    <name type="scientific">Shigella boydii</name>
    <dbReference type="NCBI Taxonomy" id="621"/>
    <lineage>
        <taxon>Bacteria</taxon>
        <taxon>Pseudomonadati</taxon>
        <taxon>Pseudomonadota</taxon>
        <taxon>Gammaproteobacteria</taxon>
        <taxon>Enterobacterales</taxon>
        <taxon>Enterobacteriaceae</taxon>
        <taxon>Shigella</taxon>
    </lineage>
</organism>
<dbReference type="EC" id="5.1.1.1"/>
<dbReference type="EMBL" id="AB070926">
    <property type="protein sequence ID" value="BAB71771.1"/>
    <property type="molecule type" value="Genomic_DNA"/>
</dbReference>
<dbReference type="RefSeq" id="WP_001147328.1">
    <property type="nucleotide sequence ID" value="NZ_SAZA01000285.1"/>
</dbReference>
<dbReference type="SMR" id="P0A6B6"/>
<dbReference type="GeneID" id="75204196"/>
<dbReference type="BRENDA" id="5.1.1.1">
    <property type="organism ID" value="5710"/>
</dbReference>
<dbReference type="UniPathway" id="UPA00042">
    <property type="reaction ID" value="UER00497"/>
</dbReference>
<dbReference type="UniPathway" id="UPA00219"/>
<dbReference type="GO" id="GO:0005829">
    <property type="term" value="C:cytosol"/>
    <property type="evidence" value="ECO:0007669"/>
    <property type="project" value="TreeGrafter"/>
</dbReference>
<dbReference type="GO" id="GO:0008784">
    <property type="term" value="F:alanine racemase activity"/>
    <property type="evidence" value="ECO:0007669"/>
    <property type="project" value="UniProtKB-UniRule"/>
</dbReference>
<dbReference type="GO" id="GO:0030170">
    <property type="term" value="F:pyridoxal phosphate binding"/>
    <property type="evidence" value="ECO:0007669"/>
    <property type="project" value="UniProtKB-UniRule"/>
</dbReference>
<dbReference type="GO" id="GO:0071555">
    <property type="term" value="P:cell wall organization"/>
    <property type="evidence" value="ECO:0007669"/>
    <property type="project" value="UniProtKB-KW"/>
</dbReference>
<dbReference type="GO" id="GO:0030632">
    <property type="term" value="P:D-alanine biosynthetic process"/>
    <property type="evidence" value="ECO:0007669"/>
    <property type="project" value="UniProtKB-UniRule"/>
</dbReference>
<dbReference type="GO" id="GO:0009252">
    <property type="term" value="P:peptidoglycan biosynthetic process"/>
    <property type="evidence" value="ECO:0007669"/>
    <property type="project" value="UniProtKB-UniPathway"/>
</dbReference>
<dbReference type="GO" id="GO:0008360">
    <property type="term" value="P:regulation of cell shape"/>
    <property type="evidence" value="ECO:0007669"/>
    <property type="project" value="UniProtKB-KW"/>
</dbReference>
<dbReference type="CDD" id="cd06827">
    <property type="entry name" value="PLPDE_III_AR_proteobact"/>
    <property type="match status" value="1"/>
</dbReference>
<dbReference type="FunFam" id="2.40.37.10:FF:000002">
    <property type="entry name" value="Alanine racemase"/>
    <property type="match status" value="1"/>
</dbReference>
<dbReference type="FunFam" id="3.20.20.10:FF:000002">
    <property type="entry name" value="Alanine racemase"/>
    <property type="match status" value="1"/>
</dbReference>
<dbReference type="Gene3D" id="3.20.20.10">
    <property type="entry name" value="Alanine racemase"/>
    <property type="match status" value="1"/>
</dbReference>
<dbReference type="Gene3D" id="2.40.37.10">
    <property type="entry name" value="Lyase, Ornithine Decarboxylase, Chain A, domain 1"/>
    <property type="match status" value="1"/>
</dbReference>
<dbReference type="HAMAP" id="MF_01201">
    <property type="entry name" value="Ala_racemase"/>
    <property type="match status" value="1"/>
</dbReference>
<dbReference type="InterPro" id="IPR000821">
    <property type="entry name" value="Ala_racemase"/>
</dbReference>
<dbReference type="InterPro" id="IPR009006">
    <property type="entry name" value="Ala_racemase/Decarboxylase_C"/>
</dbReference>
<dbReference type="InterPro" id="IPR011079">
    <property type="entry name" value="Ala_racemase_C"/>
</dbReference>
<dbReference type="InterPro" id="IPR001608">
    <property type="entry name" value="Ala_racemase_N"/>
</dbReference>
<dbReference type="InterPro" id="IPR020622">
    <property type="entry name" value="Ala_racemase_pyridoxalP-BS"/>
</dbReference>
<dbReference type="InterPro" id="IPR029066">
    <property type="entry name" value="PLP-binding_barrel"/>
</dbReference>
<dbReference type="NCBIfam" id="TIGR00492">
    <property type="entry name" value="alr"/>
    <property type="match status" value="1"/>
</dbReference>
<dbReference type="PANTHER" id="PTHR30511">
    <property type="entry name" value="ALANINE RACEMASE"/>
    <property type="match status" value="1"/>
</dbReference>
<dbReference type="PANTHER" id="PTHR30511:SF4">
    <property type="entry name" value="ALANINE RACEMASE, BIOSYNTHETIC"/>
    <property type="match status" value="1"/>
</dbReference>
<dbReference type="Pfam" id="PF00842">
    <property type="entry name" value="Ala_racemase_C"/>
    <property type="match status" value="1"/>
</dbReference>
<dbReference type="Pfam" id="PF01168">
    <property type="entry name" value="Ala_racemase_N"/>
    <property type="match status" value="1"/>
</dbReference>
<dbReference type="PRINTS" id="PR00992">
    <property type="entry name" value="ALARACEMASE"/>
</dbReference>
<dbReference type="SMART" id="SM01005">
    <property type="entry name" value="Ala_racemase_C"/>
    <property type="match status" value="1"/>
</dbReference>
<dbReference type="SUPFAM" id="SSF50621">
    <property type="entry name" value="Alanine racemase C-terminal domain-like"/>
    <property type="match status" value="1"/>
</dbReference>
<dbReference type="SUPFAM" id="SSF51419">
    <property type="entry name" value="PLP-binding barrel"/>
    <property type="match status" value="1"/>
</dbReference>
<dbReference type="PROSITE" id="PS00395">
    <property type="entry name" value="ALANINE_RACEMASE"/>
    <property type="match status" value="1"/>
</dbReference>
<accession>P0A6B6</accession>
<accession>P29743</accession>
<accession>P78136</accession>
<gene>
    <name type="primary">alr</name>
</gene>
<proteinExistence type="evidence at protein level"/>
<feature type="chain" id="PRO_0000114563" description="Alanine racemase, biosynthetic">
    <location>
        <begin position="1"/>
        <end position="359"/>
    </location>
</feature>
<feature type="active site" description="Proton acceptor; specific for D-alanine" evidence="1">
    <location>
        <position position="34"/>
    </location>
</feature>
<feature type="active site" description="Proton acceptor; specific for L-alanine" evidence="1">
    <location>
        <position position="255"/>
    </location>
</feature>
<feature type="binding site" evidence="1">
    <location>
        <position position="129"/>
    </location>
    <ligand>
        <name>substrate</name>
    </ligand>
</feature>
<feature type="binding site" evidence="1">
    <location>
        <position position="303"/>
    </location>
    <ligand>
        <name>substrate</name>
    </ligand>
</feature>
<feature type="modified residue" description="N6-(pyridoxal phosphate)lysine" evidence="1">
    <location>
        <position position="34"/>
    </location>
</feature>
<name>ALR1_SHIBO</name>